<comment type="function">
    <text evidence="1">Produces ATP from ADP in the presence of a proton gradient across the membrane. The alpha chain is a regulatory subunit.</text>
</comment>
<comment type="catalytic activity">
    <reaction evidence="1">
        <text>ATP + H2O + 4 H(+)(in) = ADP + phosphate + 5 H(+)(out)</text>
        <dbReference type="Rhea" id="RHEA:57720"/>
        <dbReference type="ChEBI" id="CHEBI:15377"/>
        <dbReference type="ChEBI" id="CHEBI:15378"/>
        <dbReference type="ChEBI" id="CHEBI:30616"/>
        <dbReference type="ChEBI" id="CHEBI:43474"/>
        <dbReference type="ChEBI" id="CHEBI:456216"/>
        <dbReference type="EC" id="7.1.2.2"/>
    </reaction>
</comment>
<comment type="subunit">
    <text evidence="1">F-type ATPases have 2 components, CF(1) - the catalytic core - and CF(0) - the membrane proton channel. CF(1) has five subunits: alpha(3), beta(3), gamma(1), delta(1), epsilon(1). CF(0) has three main subunits: a(1), b(2) and c(9-12). The alpha and beta chains form an alternating ring which encloses part of the gamma chain. CF(1) is attached to CF(0) by a central stalk formed by the gamma and epsilon chains, while a peripheral stalk is formed by the delta and b chains.</text>
</comment>
<comment type="subcellular location">
    <subcellularLocation>
        <location evidence="1">Cell inner membrane</location>
        <topology evidence="1">Peripheral membrane protein</topology>
    </subcellularLocation>
</comment>
<comment type="similarity">
    <text evidence="1">Belongs to the ATPase alpha/beta chains family.</text>
</comment>
<evidence type="ECO:0000255" key="1">
    <source>
        <dbReference type="HAMAP-Rule" id="MF_01346"/>
    </source>
</evidence>
<organism>
    <name type="scientific">Burkholderia mallei (strain NCTC 10229)</name>
    <dbReference type="NCBI Taxonomy" id="412022"/>
    <lineage>
        <taxon>Bacteria</taxon>
        <taxon>Pseudomonadati</taxon>
        <taxon>Pseudomonadota</taxon>
        <taxon>Betaproteobacteria</taxon>
        <taxon>Burkholderiales</taxon>
        <taxon>Burkholderiaceae</taxon>
        <taxon>Burkholderia</taxon>
        <taxon>pseudomallei group</taxon>
    </lineage>
</organism>
<reference key="1">
    <citation type="journal article" date="2010" name="Genome Biol. Evol.">
        <title>Continuing evolution of Burkholderia mallei through genome reduction and large-scale rearrangements.</title>
        <authorList>
            <person name="Losada L."/>
            <person name="Ronning C.M."/>
            <person name="DeShazer D."/>
            <person name="Woods D."/>
            <person name="Fedorova N."/>
            <person name="Kim H.S."/>
            <person name="Shabalina S.A."/>
            <person name="Pearson T.R."/>
            <person name="Brinkac L."/>
            <person name="Tan P."/>
            <person name="Nandi T."/>
            <person name="Crabtree J."/>
            <person name="Badger J."/>
            <person name="Beckstrom-Sternberg S."/>
            <person name="Saqib M."/>
            <person name="Schutzer S.E."/>
            <person name="Keim P."/>
            <person name="Nierman W.C."/>
        </authorList>
    </citation>
    <scope>NUCLEOTIDE SEQUENCE [LARGE SCALE GENOMIC DNA]</scope>
    <source>
        <strain>NCTC 10229</strain>
    </source>
</reference>
<proteinExistence type="inferred from homology"/>
<keyword id="KW-0066">ATP synthesis</keyword>
<keyword id="KW-0067">ATP-binding</keyword>
<keyword id="KW-0997">Cell inner membrane</keyword>
<keyword id="KW-1003">Cell membrane</keyword>
<keyword id="KW-0139">CF(1)</keyword>
<keyword id="KW-0375">Hydrogen ion transport</keyword>
<keyword id="KW-0406">Ion transport</keyword>
<keyword id="KW-0472">Membrane</keyword>
<keyword id="KW-0547">Nucleotide-binding</keyword>
<keyword id="KW-1278">Translocase</keyword>
<keyword id="KW-0813">Transport</keyword>
<gene>
    <name evidence="1" type="primary">atpA</name>
    <name type="ordered locus">BMA10229_A1589</name>
</gene>
<dbReference type="EC" id="7.1.2.2" evidence="1"/>
<dbReference type="EMBL" id="CP000546">
    <property type="protein sequence ID" value="ABN01119.1"/>
    <property type="molecule type" value="Genomic_DNA"/>
</dbReference>
<dbReference type="RefSeq" id="WP_004195830.1">
    <property type="nucleotide sequence ID" value="NC_008836.1"/>
</dbReference>
<dbReference type="SMR" id="A2S6K0"/>
<dbReference type="GeneID" id="92980624"/>
<dbReference type="KEGG" id="bml:BMA10229_A1589"/>
<dbReference type="HOGENOM" id="CLU_010091_2_1_4"/>
<dbReference type="Proteomes" id="UP000002283">
    <property type="component" value="Chromosome I"/>
</dbReference>
<dbReference type="GO" id="GO:0005886">
    <property type="term" value="C:plasma membrane"/>
    <property type="evidence" value="ECO:0007669"/>
    <property type="project" value="UniProtKB-SubCell"/>
</dbReference>
<dbReference type="GO" id="GO:0045259">
    <property type="term" value="C:proton-transporting ATP synthase complex"/>
    <property type="evidence" value="ECO:0007669"/>
    <property type="project" value="UniProtKB-KW"/>
</dbReference>
<dbReference type="GO" id="GO:0043531">
    <property type="term" value="F:ADP binding"/>
    <property type="evidence" value="ECO:0007669"/>
    <property type="project" value="TreeGrafter"/>
</dbReference>
<dbReference type="GO" id="GO:0005524">
    <property type="term" value="F:ATP binding"/>
    <property type="evidence" value="ECO:0007669"/>
    <property type="project" value="UniProtKB-UniRule"/>
</dbReference>
<dbReference type="GO" id="GO:0046933">
    <property type="term" value="F:proton-transporting ATP synthase activity, rotational mechanism"/>
    <property type="evidence" value="ECO:0007669"/>
    <property type="project" value="UniProtKB-UniRule"/>
</dbReference>
<dbReference type="CDD" id="cd18113">
    <property type="entry name" value="ATP-synt_F1_alpha_C"/>
    <property type="match status" value="1"/>
</dbReference>
<dbReference type="CDD" id="cd18116">
    <property type="entry name" value="ATP-synt_F1_alpha_N"/>
    <property type="match status" value="1"/>
</dbReference>
<dbReference type="CDD" id="cd01132">
    <property type="entry name" value="F1-ATPase_alpha_CD"/>
    <property type="match status" value="1"/>
</dbReference>
<dbReference type="FunFam" id="1.20.150.20:FF:000001">
    <property type="entry name" value="ATP synthase subunit alpha"/>
    <property type="match status" value="1"/>
</dbReference>
<dbReference type="FunFam" id="2.40.30.20:FF:000001">
    <property type="entry name" value="ATP synthase subunit alpha"/>
    <property type="match status" value="1"/>
</dbReference>
<dbReference type="FunFam" id="3.40.50.300:FF:000002">
    <property type="entry name" value="ATP synthase subunit alpha"/>
    <property type="match status" value="1"/>
</dbReference>
<dbReference type="Gene3D" id="2.40.30.20">
    <property type="match status" value="1"/>
</dbReference>
<dbReference type="Gene3D" id="1.20.150.20">
    <property type="entry name" value="ATP synthase alpha/beta chain, C-terminal domain"/>
    <property type="match status" value="1"/>
</dbReference>
<dbReference type="Gene3D" id="3.40.50.300">
    <property type="entry name" value="P-loop containing nucleotide triphosphate hydrolases"/>
    <property type="match status" value="1"/>
</dbReference>
<dbReference type="HAMAP" id="MF_01346">
    <property type="entry name" value="ATP_synth_alpha_bact"/>
    <property type="match status" value="1"/>
</dbReference>
<dbReference type="InterPro" id="IPR023366">
    <property type="entry name" value="ATP_synth_asu-like_sf"/>
</dbReference>
<dbReference type="InterPro" id="IPR000793">
    <property type="entry name" value="ATP_synth_asu_C"/>
</dbReference>
<dbReference type="InterPro" id="IPR038376">
    <property type="entry name" value="ATP_synth_asu_C_sf"/>
</dbReference>
<dbReference type="InterPro" id="IPR033732">
    <property type="entry name" value="ATP_synth_F1_a_nt-bd_dom"/>
</dbReference>
<dbReference type="InterPro" id="IPR005294">
    <property type="entry name" value="ATP_synth_F1_asu"/>
</dbReference>
<dbReference type="InterPro" id="IPR020003">
    <property type="entry name" value="ATPase_a/bsu_AS"/>
</dbReference>
<dbReference type="InterPro" id="IPR004100">
    <property type="entry name" value="ATPase_F1/V1/A1_a/bsu_N"/>
</dbReference>
<dbReference type="InterPro" id="IPR036121">
    <property type="entry name" value="ATPase_F1/V1/A1_a/bsu_N_sf"/>
</dbReference>
<dbReference type="InterPro" id="IPR000194">
    <property type="entry name" value="ATPase_F1/V1/A1_a/bsu_nucl-bd"/>
</dbReference>
<dbReference type="InterPro" id="IPR027417">
    <property type="entry name" value="P-loop_NTPase"/>
</dbReference>
<dbReference type="NCBIfam" id="TIGR00962">
    <property type="entry name" value="atpA"/>
    <property type="match status" value="1"/>
</dbReference>
<dbReference type="NCBIfam" id="NF009884">
    <property type="entry name" value="PRK13343.1"/>
    <property type="match status" value="1"/>
</dbReference>
<dbReference type="PANTHER" id="PTHR48082">
    <property type="entry name" value="ATP SYNTHASE SUBUNIT ALPHA, MITOCHONDRIAL"/>
    <property type="match status" value="1"/>
</dbReference>
<dbReference type="PANTHER" id="PTHR48082:SF2">
    <property type="entry name" value="ATP SYNTHASE SUBUNIT ALPHA, MITOCHONDRIAL"/>
    <property type="match status" value="1"/>
</dbReference>
<dbReference type="Pfam" id="PF00006">
    <property type="entry name" value="ATP-synt_ab"/>
    <property type="match status" value="1"/>
</dbReference>
<dbReference type="Pfam" id="PF00306">
    <property type="entry name" value="ATP-synt_ab_C"/>
    <property type="match status" value="1"/>
</dbReference>
<dbReference type="Pfam" id="PF02874">
    <property type="entry name" value="ATP-synt_ab_N"/>
    <property type="match status" value="1"/>
</dbReference>
<dbReference type="PIRSF" id="PIRSF039088">
    <property type="entry name" value="F_ATPase_subunit_alpha"/>
    <property type="match status" value="1"/>
</dbReference>
<dbReference type="SUPFAM" id="SSF47917">
    <property type="entry name" value="C-terminal domain of alpha and beta subunits of F1 ATP synthase"/>
    <property type="match status" value="1"/>
</dbReference>
<dbReference type="SUPFAM" id="SSF50615">
    <property type="entry name" value="N-terminal domain of alpha and beta subunits of F1 ATP synthase"/>
    <property type="match status" value="1"/>
</dbReference>
<dbReference type="SUPFAM" id="SSF52540">
    <property type="entry name" value="P-loop containing nucleoside triphosphate hydrolases"/>
    <property type="match status" value="1"/>
</dbReference>
<dbReference type="PROSITE" id="PS00152">
    <property type="entry name" value="ATPASE_ALPHA_BETA"/>
    <property type="match status" value="1"/>
</dbReference>
<protein>
    <recommendedName>
        <fullName evidence="1">ATP synthase subunit alpha</fullName>
        <ecNumber evidence="1">7.1.2.2</ecNumber>
    </recommendedName>
    <alternativeName>
        <fullName evidence="1">ATP synthase F1 sector subunit alpha</fullName>
    </alternativeName>
    <alternativeName>
        <fullName evidence="1">F-ATPase subunit alpha</fullName>
    </alternativeName>
</protein>
<sequence>MQLNPSEISELIKSRIQGLEASADVRNQGTVISVTDGIVRIHGLSDVMQGEMLEFPGNTFGLALNLERDSVGAVILGEYEHISEGDIVKTTGRILEVPVGPELVGRVLDALGNPIDGKGPVNAKLTDAIEKIAPGVIWRKSVSQPVQTGLKSIDSMVPIGRGQRELIIGDRQCGKTAVAIDTIINQKGKDLICIYVAIGQKASSIMNVVRKLEETGALEYTIVVAASASESAAMQYLAPYAGCTMGEYFRDRGQDALIIYDDLTKQAWAYRQISLLLRRPPGREAYPGDVFYLHSRLLERAARVSEEYVEKFTNGEVKGKSGSLTALPVIETQAGDVTAFVPTNVISITDGQIFLETDLFNAGIRPAINAGVSVSRVGGAAQTKVVKKLSGGIRTDLAQYRELAAFAQFASDLDEATRKQLERGRRVTELLKQPQYQPLQVWELAVSLFSANNGYLDDLDVKDVLPFEKGLREYLKTSHADLIKRIEDTKDLSKDDESALHAALKDFKKSGAY</sequence>
<accession>A2S6K0</accession>
<feature type="chain" id="PRO_1000055054" description="ATP synthase subunit alpha">
    <location>
        <begin position="1"/>
        <end position="513"/>
    </location>
</feature>
<feature type="binding site" evidence="1">
    <location>
        <begin position="169"/>
        <end position="176"/>
    </location>
    <ligand>
        <name>ATP</name>
        <dbReference type="ChEBI" id="CHEBI:30616"/>
    </ligand>
</feature>
<feature type="site" description="Required for activity" evidence="1">
    <location>
        <position position="373"/>
    </location>
</feature>
<name>ATPA_BURM9</name>